<sequence length="289" mass="32641">MTLKVKGEGLGAQVTGVDPKNLDDITTDEIRDIVYTNKLVVLKDVHPSPREFIKLGRIIGQIVPYYEPMYHHEDHPEIFVSSTEEGQGVPKTGAFWHIDYMFMPEPFAFSMVLPLAVPGHDRGTYFIDLARVWQSLPAAKRDPARGTVSTHDPRRHIKIRPSDVYRPIGEVWDEINRTTPPIKWPTVIRHPKTGQEILYICATGTTKIEDKDGNPVDPEVLQELMAATGQLDPEYQSPFIHTQHYQVGDIILWDNRVLMHRAKHGSAAGTLTTYRLTMLDGLKTPGYAA</sequence>
<keyword id="KW-0002">3D-structure</keyword>
<keyword id="KW-0223">Dioxygenase</keyword>
<keyword id="KW-0408">Iron</keyword>
<keyword id="KW-0479">Metal-binding</keyword>
<keyword id="KW-0560">Oxidoreductase</keyword>
<keyword id="KW-1185">Reference proteome</keyword>
<gene>
    <name type="ordered locus">Rv0097</name>
    <name type="ORF">MTCY251.16</name>
</gene>
<organism>
    <name type="scientific">Mycobacterium tuberculosis (strain ATCC 25618 / H37Rv)</name>
    <dbReference type="NCBI Taxonomy" id="83332"/>
    <lineage>
        <taxon>Bacteria</taxon>
        <taxon>Bacillati</taxon>
        <taxon>Actinomycetota</taxon>
        <taxon>Actinomycetes</taxon>
        <taxon>Mycobacteriales</taxon>
        <taxon>Mycobacteriaceae</taxon>
        <taxon>Mycobacterium</taxon>
        <taxon>Mycobacterium tuberculosis complex</taxon>
    </lineage>
</organism>
<name>INLPE_MYCTU</name>
<evidence type="ECO:0000250" key="1">
    <source>
        <dbReference type="UniProtKB" id="A0A3B6UEU3"/>
    </source>
</evidence>
<evidence type="ECO:0000269" key="2">
    <source>
    </source>
</evidence>
<evidence type="ECO:0000269" key="3">
    <source>
    </source>
</evidence>
<evidence type="ECO:0000305" key="4"/>
<evidence type="ECO:0000305" key="5">
    <source>
    </source>
</evidence>
<evidence type="ECO:0007829" key="6">
    <source>
        <dbReference type="PDB" id="8KHT"/>
    </source>
</evidence>
<proteinExistence type="evidence at protein level"/>
<reference key="1">
    <citation type="journal article" date="1998" name="Nature">
        <title>Deciphering the biology of Mycobacterium tuberculosis from the complete genome sequence.</title>
        <authorList>
            <person name="Cole S.T."/>
            <person name="Brosch R."/>
            <person name="Parkhill J."/>
            <person name="Garnier T."/>
            <person name="Churcher C.M."/>
            <person name="Harris D.E."/>
            <person name="Gordon S.V."/>
            <person name="Eiglmeier K."/>
            <person name="Gas S."/>
            <person name="Barry C.E. III"/>
            <person name="Tekaia F."/>
            <person name="Badcock K."/>
            <person name="Basham D."/>
            <person name="Brown D."/>
            <person name="Chillingworth T."/>
            <person name="Connor R."/>
            <person name="Davies R.M."/>
            <person name="Devlin K."/>
            <person name="Feltwell T."/>
            <person name="Gentles S."/>
            <person name="Hamlin N."/>
            <person name="Holroyd S."/>
            <person name="Hornsby T."/>
            <person name="Jagels K."/>
            <person name="Krogh A."/>
            <person name="McLean J."/>
            <person name="Moule S."/>
            <person name="Murphy L.D."/>
            <person name="Oliver S."/>
            <person name="Osborne J."/>
            <person name="Quail M.A."/>
            <person name="Rajandream M.A."/>
            <person name="Rogers J."/>
            <person name="Rutter S."/>
            <person name="Seeger K."/>
            <person name="Skelton S."/>
            <person name="Squares S."/>
            <person name="Squares R."/>
            <person name="Sulston J.E."/>
            <person name="Taylor K."/>
            <person name="Whitehead S."/>
            <person name="Barrell B.G."/>
        </authorList>
    </citation>
    <scope>NUCLEOTIDE SEQUENCE [LARGE SCALE GENOMIC DNA]</scope>
    <source>
        <strain>ATCC 25618 / H37Rv</strain>
    </source>
</reference>
<reference key="2">
    <citation type="journal article" date="2011" name="Mol. Cell. Proteomics">
        <title>Proteogenomic analysis of Mycobacterium tuberculosis by high resolution mass spectrometry.</title>
        <authorList>
            <person name="Kelkar D.S."/>
            <person name="Kumar D."/>
            <person name="Kumar P."/>
            <person name="Balakrishnan L."/>
            <person name="Muthusamy B."/>
            <person name="Yadav A.K."/>
            <person name="Shrivastava P."/>
            <person name="Marimuthu A."/>
            <person name="Anand S."/>
            <person name="Sundaram H."/>
            <person name="Kingsbury R."/>
            <person name="Harsha H.C."/>
            <person name="Nair B."/>
            <person name="Prasad T.S."/>
            <person name="Chauhan D.S."/>
            <person name="Katoch K."/>
            <person name="Katoch V.M."/>
            <person name="Kumar P."/>
            <person name="Chaerkady R."/>
            <person name="Ramachandran S."/>
            <person name="Dash D."/>
            <person name="Pandey A."/>
        </authorList>
    </citation>
    <scope>IDENTIFICATION BY MASS SPECTROMETRY [LARGE SCALE ANALYSIS]</scope>
    <source>
        <strain>ATCC 25618 / H37Rv</strain>
    </source>
</reference>
<reference key="3">
    <citation type="journal article" date="2010" name="Proc. Natl. Acad. Sci. U.S.A.">
        <title>Mycobacterium tuberculosis persistence mutants identified by screening in isoniazid-treated mice.</title>
        <authorList>
            <person name="Dhar N."/>
            <person name="McKinney J.D."/>
        </authorList>
    </citation>
    <scope>DISRUPTION PHENOTYPE</scope>
</reference>
<reference key="4">
    <citation type="journal article" date="2017" name="Proc. Natl. Acad. Sci. U.S.A.">
        <title>Biosynthesis of isonitrile lipopeptides by conserved nonribosomal peptide synthetase gene clusters in Actinobacteria.</title>
        <authorList>
            <person name="Harris N.C."/>
            <person name="Sato M."/>
            <person name="Herman N.A."/>
            <person name="Twigg F."/>
            <person name="Cai W."/>
            <person name="Liu J."/>
            <person name="Zhu X."/>
            <person name="Downey J."/>
            <person name="Khalaf R."/>
            <person name="Martin J."/>
            <person name="Koshino H."/>
            <person name="Zhang W."/>
        </authorList>
    </citation>
    <scope>FUNCTION</scope>
    <source>
        <strain>ATCC 25618 / H37Rv</strain>
    </source>
</reference>
<protein>
    <recommendedName>
        <fullName evidence="5">(3R)-3-[(carboxymethyl)amino]fatty acid oxygenase/decarboxylase</fullName>
        <ecNumber evidence="1">1.14.11.78</ecNumber>
    </recommendedName>
</protein>
<comment type="function">
    <text evidence="1 3">Involved in the biosynthesis of a unique class of isonitrile lipopeptides (INLPs) that seem to function as virulence factors in M.tuberculosis and to play a role in metal acquisition (PubMed:28634299). Catalyzes the conversion of (3R)-3-[(carboxymethyl)amino]fatty acids to (3R)-3-isocyanyl-fatty acids through an oxidative decarboxylation mechanism, thereby generating the isonitrile group of INLPs (By similarity).</text>
</comment>
<comment type="catalytic activity">
    <reaction evidence="1">
        <text>a (3R)-3-[(carboxymethyl)amino]fatty acid + 2 2-oxoglutarate + 2 O2 = a (3R)-3-isocyanyl-fatty acid + 2 succinate + 3 CO2 + 2 H2O</text>
        <dbReference type="Rhea" id="RHEA:74931"/>
        <dbReference type="ChEBI" id="CHEBI:15377"/>
        <dbReference type="ChEBI" id="CHEBI:15379"/>
        <dbReference type="ChEBI" id="CHEBI:16526"/>
        <dbReference type="ChEBI" id="CHEBI:16810"/>
        <dbReference type="ChEBI" id="CHEBI:30031"/>
        <dbReference type="ChEBI" id="CHEBI:193080"/>
        <dbReference type="ChEBI" id="CHEBI:193084"/>
        <dbReference type="EC" id="1.14.11.78"/>
    </reaction>
    <physiologicalReaction direction="left-to-right" evidence="1">
        <dbReference type="Rhea" id="RHEA:74932"/>
    </physiologicalReaction>
</comment>
<comment type="catalytic activity">
    <reaction evidence="1">
        <text>a (3R)-3-[(carboxymethyl)amino]fatty acid + 2-oxoglutarate + O2 = a (3R)-3-{[carboxy(hydroxy)methyl]amino}fatty acid + succinate + CO2</text>
        <dbReference type="Rhea" id="RHEA:74939"/>
        <dbReference type="ChEBI" id="CHEBI:15379"/>
        <dbReference type="ChEBI" id="CHEBI:16526"/>
        <dbReference type="ChEBI" id="CHEBI:16810"/>
        <dbReference type="ChEBI" id="CHEBI:30031"/>
        <dbReference type="ChEBI" id="CHEBI:193080"/>
        <dbReference type="ChEBI" id="CHEBI:193082"/>
    </reaction>
    <physiologicalReaction direction="left-to-right" evidence="1">
        <dbReference type="Rhea" id="RHEA:74940"/>
    </physiologicalReaction>
</comment>
<comment type="catalytic activity">
    <reaction evidence="1">
        <text>a (3R)-3-{[carboxy(hydroxy)methyl]amino}fatty acid + 2-oxoglutarate + O2 = a (3R)-3-isocyanyl-fatty acid + succinate + 2 CO2 + 2 H2O</text>
        <dbReference type="Rhea" id="RHEA:74943"/>
        <dbReference type="ChEBI" id="CHEBI:15377"/>
        <dbReference type="ChEBI" id="CHEBI:15379"/>
        <dbReference type="ChEBI" id="CHEBI:16526"/>
        <dbReference type="ChEBI" id="CHEBI:16810"/>
        <dbReference type="ChEBI" id="CHEBI:30031"/>
        <dbReference type="ChEBI" id="CHEBI:193082"/>
        <dbReference type="ChEBI" id="CHEBI:193084"/>
    </reaction>
    <physiologicalReaction direction="left-to-right" evidence="1">
        <dbReference type="Rhea" id="RHEA:74944"/>
    </physiologicalReaction>
</comment>
<comment type="cofactor">
    <cofactor evidence="1">
        <name>Fe(2+)</name>
        <dbReference type="ChEBI" id="CHEBI:29033"/>
    </cofactor>
</comment>
<comment type="disruption phenotype">
    <text evidence="2">Disruption of this gene attenuates M.tuberculosis growth and survival in untreated mice.</text>
</comment>
<comment type="miscellaneous">
    <text evidence="1">Isonitrile formation goes through two consecutive, but distinctive, 2-oxoglutarate-dpendent reactions catalyzed by this enzyme. In the first reaction, an Fe(IV)-oxo species is utilized to generate a (3R)-3-{[carboxy(hydroxy)methyl]amino}fatty acid. Then, its conversion into a (3R)-3-isocyanyl-fatty acid likely proceeds by decarboxylation-assisted desaturation.</text>
</comment>
<comment type="similarity">
    <text evidence="4">Belongs to the TfdA dioxygenase family.</text>
</comment>
<dbReference type="EC" id="1.14.11.78" evidence="1"/>
<dbReference type="EMBL" id="AL123456">
    <property type="protein sequence ID" value="CCP42822.1"/>
    <property type="molecule type" value="Genomic_DNA"/>
</dbReference>
<dbReference type="PIR" id="A70751">
    <property type="entry name" value="A70751"/>
</dbReference>
<dbReference type="RefSeq" id="NP_214611.1">
    <property type="nucleotide sequence ID" value="NC_000962.3"/>
</dbReference>
<dbReference type="RefSeq" id="WP_003400786.1">
    <property type="nucleotide sequence ID" value="NZ_NVQJ01000053.1"/>
</dbReference>
<dbReference type="PDB" id="8KHT">
    <property type="method" value="X-ray"/>
    <property type="resolution" value="2.05 A"/>
    <property type="chains" value="A/B=1-289"/>
</dbReference>
<dbReference type="PDBsum" id="8KHT"/>
<dbReference type="SMR" id="P9WG83"/>
<dbReference type="STRING" id="83332.Rv0097"/>
<dbReference type="PaxDb" id="83332-Rv0097"/>
<dbReference type="DNASU" id="886942"/>
<dbReference type="GeneID" id="886942"/>
<dbReference type="KEGG" id="mtu:Rv0097"/>
<dbReference type="KEGG" id="mtv:RVBD_0097"/>
<dbReference type="TubercuList" id="Rv0097"/>
<dbReference type="eggNOG" id="COG2175">
    <property type="taxonomic scope" value="Bacteria"/>
</dbReference>
<dbReference type="InParanoid" id="P9WG83"/>
<dbReference type="OrthoDB" id="581608at2"/>
<dbReference type="PhylomeDB" id="P9WG83"/>
<dbReference type="Proteomes" id="UP000001584">
    <property type="component" value="Chromosome"/>
</dbReference>
<dbReference type="GO" id="GO:0051213">
    <property type="term" value="F:dioxygenase activity"/>
    <property type="evidence" value="ECO:0007669"/>
    <property type="project" value="UniProtKB-KW"/>
</dbReference>
<dbReference type="GO" id="GO:0046872">
    <property type="term" value="F:metal ion binding"/>
    <property type="evidence" value="ECO:0007669"/>
    <property type="project" value="UniProtKB-KW"/>
</dbReference>
<dbReference type="Gene3D" id="3.60.130.10">
    <property type="entry name" value="Clavaminate synthase-like"/>
    <property type="match status" value="1"/>
</dbReference>
<dbReference type="InterPro" id="IPR042098">
    <property type="entry name" value="TauD-like_sf"/>
</dbReference>
<dbReference type="InterPro" id="IPR003819">
    <property type="entry name" value="TauD/TfdA-like"/>
</dbReference>
<dbReference type="InterPro" id="IPR051178">
    <property type="entry name" value="TfdA_dioxygenase"/>
</dbReference>
<dbReference type="PANTHER" id="PTHR43779:SF3">
    <property type="entry name" value="(3R)-3-[(CARBOXYMETHYL)AMINO]FATTY ACID OXYGENASE_DECARBOXYLASE"/>
    <property type="match status" value="1"/>
</dbReference>
<dbReference type="PANTHER" id="PTHR43779">
    <property type="entry name" value="DIOXYGENASE RV0097-RELATED"/>
    <property type="match status" value="1"/>
</dbReference>
<dbReference type="Pfam" id="PF02668">
    <property type="entry name" value="TauD"/>
    <property type="match status" value="1"/>
</dbReference>
<dbReference type="SUPFAM" id="SSF51197">
    <property type="entry name" value="Clavaminate synthase-like"/>
    <property type="match status" value="1"/>
</dbReference>
<accession>P9WG83</accession>
<accession>L0T5I4</accession>
<accession>P67755</accession>
<accession>Q10893</accession>
<feature type="chain" id="PRO_0000194020" description="(3R)-3-[(carboxymethyl)amino]fatty acid oxygenase/decarboxylase">
    <location>
        <begin position="1"/>
        <end position="289"/>
    </location>
</feature>
<feature type="binding site" evidence="1">
    <location>
        <position position="65"/>
    </location>
    <ligand>
        <name>a (3R)-3-[(carboxymethyl)amino]fatty acid</name>
        <dbReference type="ChEBI" id="CHEBI:193080"/>
    </ligand>
</feature>
<feature type="binding site" evidence="1">
    <location>
        <position position="70"/>
    </location>
    <ligand>
        <name>a (3R)-3-[(carboxymethyl)amino]fatty acid</name>
        <dbReference type="ChEBI" id="CHEBI:193080"/>
    </ligand>
</feature>
<feature type="binding site" evidence="1">
    <location>
        <position position="93"/>
    </location>
    <ligand>
        <name>a (3R)-3-[(carboxymethyl)amino]fatty acid</name>
        <dbReference type="ChEBI" id="CHEBI:193080"/>
    </ligand>
</feature>
<feature type="binding site" evidence="1">
    <location>
        <position position="97"/>
    </location>
    <ligand>
        <name>Fe(2+)</name>
        <dbReference type="ChEBI" id="CHEBI:29033"/>
    </ligand>
</feature>
<feature type="binding site" evidence="1">
    <location>
        <position position="99"/>
    </location>
    <ligand>
        <name>Fe(2+)</name>
        <dbReference type="ChEBI" id="CHEBI:29033"/>
    </ligand>
</feature>
<feature type="binding site" evidence="1">
    <location>
        <position position="100"/>
    </location>
    <ligand>
        <name>a (3R)-3-[(carboxymethyl)amino]fatty acid</name>
        <dbReference type="ChEBI" id="CHEBI:193080"/>
    </ligand>
</feature>
<feature type="binding site" evidence="1">
    <location>
        <position position="158"/>
    </location>
    <ligand>
        <name>a (3R)-3-[(carboxymethyl)amino]fatty acid</name>
        <dbReference type="ChEBI" id="CHEBI:193080"/>
    </ligand>
</feature>
<feature type="binding site" evidence="1">
    <location>
        <position position="260"/>
    </location>
    <ligand>
        <name>Fe(2+)</name>
        <dbReference type="ChEBI" id="CHEBI:29033"/>
    </ligand>
</feature>
<feature type="binding site" evidence="1">
    <location>
        <position position="264"/>
    </location>
    <ligand>
        <name>2-oxoglutarate</name>
        <dbReference type="ChEBI" id="CHEBI:16810"/>
    </ligand>
</feature>
<feature type="binding site" evidence="1">
    <location>
        <position position="275"/>
    </location>
    <ligand>
        <name>a (3R)-3-[(carboxymethyl)amino]fatty acid</name>
        <dbReference type="ChEBI" id="CHEBI:193080"/>
    </ligand>
</feature>
<feature type="strand" evidence="6">
    <location>
        <begin position="5"/>
        <end position="7"/>
    </location>
</feature>
<feature type="strand" evidence="6">
    <location>
        <begin position="12"/>
        <end position="14"/>
    </location>
</feature>
<feature type="strand" evidence="6">
    <location>
        <begin position="22"/>
        <end position="24"/>
    </location>
</feature>
<feature type="helix" evidence="6">
    <location>
        <begin position="27"/>
        <end position="37"/>
    </location>
</feature>
<feature type="strand" evidence="6">
    <location>
        <begin position="38"/>
        <end position="42"/>
    </location>
</feature>
<feature type="helix" evidence="6">
    <location>
        <begin position="49"/>
        <end position="59"/>
    </location>
</feature>
<feature type="strand" evidence="6">
    <location>
        <begin position="60"/>
        <end position="62"/>
    </location>
</feature>
<feature type="helix" evidence="6">
    <location>
        <begin position="68"/>
        <end position="70"/>
    </location>
</feature>
<feature type="strand" evidence="6">
    <location>
        <begin position="79"/>
        <end position="84"/>
    </location>
</feature>
<feature type="strand" evidence="6">
    <location>
        <begin position="87"/>
        <end position="91"/>
    </location>
</feature>
<feature type="turn" evidence="6">
    <location>
        <begin position="99"/>
        <end position="102"/>
    </location>
</feature>
<feature type="strand" evidence="6">
    <location>
        <begin position="103"/>
        <end position="105"/>
    </location>
</feature>
<feature type="strand" evidence="6">
    <location>
        <begin position="108"/>
        <end position="116"/>
    </location>
</feature>
<feature type="strand" evidence="6">
    <location>
        <begin position="119"/>
        <end position="121"/>
    </location>
</feature>
<feature type="strand" evidence="6">
    <location>
        <begin position="123"/>
        <end position="128"/>
    </location>
</feature>
<feature type="helix" evidence="6">
    <location>
        <begin position="129"/>
        <end position="134"/>
    </location>
</feature>
<feature type="helix" evidence="6">
    <location>
        <begin position="138"/>
        <end position="141"/>
    </location>
</feature>
<feature type="turn" evidence="6">
    <location>
        <begin position="142"/>
        <end position="146"/>
    </location>
</feature>
<feature type="strand" evidence="6">
    <location>
        <begin position="148"/>
        <end position="151"/>
    </location>
</feature>
<feature type="helix" evidence="6">
    <location>
        <begin position="154"/>
        <end position="156"/>
    </location>
</feature>
<feature type="helix" evidence="6">
    <location>
        <begin position="161"/>
        <end position="163"/>
    </location>
</feature>
<feature type="helix" evidence="6">
    <location>
        <begin position="168"/>
        <end position="178"/>
    </location>
</feature>
<feature type="strand" evidence="6">
    <location>
        <begin position="182"/>
        <end position="189"/>
    </location>
</feature>
<feature type="turn" evidence="6">
    <location>
        <begin position="191"/>
        <end position="193"/>
    </location>
</feature>
<feature type="strand" evidence="6">
    <location>
        <begin position="196"/>
        <end position="198"/>
    </location>
</feature>
<feature type="turn" evidence="6">
    <location>
        <begin position="202"/>
        <end position="204"/>
    </location>
</feature>
<feature type="strand" evidence="6">
    <location>
        <begin position="205"/>
        <end position="209"/>
    </location>
</feature>
<feature type="helix" evidence="6">
    <location>
        <begin position="218"/>
        <end position="227"/>
    </location>
</feature>
<feature type="turn" evidence="6">
    <location>
        <begin position="228"/>
        <end position="231"/>
    </location>
</feature>
<feature type="strand" evidence="6">
    <location>
        <begin position="240"/>
        <end position="244"/>
    </location>
</feature>
<feature type="strand" evidence="6">
    <location>
        <begin position="250"/>
        <end position="254"/>
    </location>
</feature>
<feature type="turn" evidence="6">
    <location>
        <begin position="255"/>
        <end position="257"/>
    </location>
</feature>
<feature type="strand" evidence="6">
    <location>
        <begin position="258"/>
        <end position="263"/>
    </location>
</feature>
<feature type="strand" evidence="6">
    <location>
        <begin position="272"/>
        <end position="279"/>
    </location>
</feature>